<name>KEFG_ECOL6</name>
<keyword id="KW-0997">Cell inner membrane</keyword>
<keyword id="KW-1003">Cell membrane</keyword>
<keyword id="KW-0472">Membrane</keyword>
<keyword id="KW-0520">NAD</keyword>
<keyword id="KW-0560">Oxidoreductase</keyword>
<keyword id="KW-1185">Reference proteome</keyword>
<gene>
    <name evidence="1" type="primary">kefG</name>
    <name type="ordered locus">c4126</name>
</gene>
<reference key="1">
    <citation type="journal article" date="2002" name="Proc. Natl. Acad. Sci. U.S.A.">
        <title>Extensive mosaic structure revealed by the complete genome sequence of uropathogenic Escherichia coli.</title>
        <authorList>
            <person name="Welch R.A."/>
            <person name="Burland V."/>
            <person name="Plunkett G. III"/>
            <person name="Redford P."/>
            <person name="Roesch P."/>
            <person name="Rasko D."/>
            <person name="Buckles E.L."/>
            <person name="Liou S.-R."/>
            <person name="Boutin A."/>
            <person name="Hackett J."/>
            <person name="Stroud D."/>
            <person name="Mayhew G.F."/>
            <person name="Rose D.J."/>
            <person name="Zhou S."/>
            <person name="Schwartz D.C."/>
            <person name="Perna N.T."/>
            <person name="Mobley H.L.T."/>
            <person name="Donnenberg M.S."/>
            <person name="Blattner F.R."/>
        </authorList>
    </citation>
    <scope>NUCLEOTIDE SEQUENCE [LARGE SCALE GENOMIC DNA]</scope>
    <source>
        <strain>CFT073 / ATCC 700928 / UPEC</strain>
    </source>
</reference>
<comment type="function">
    <text evidence="1">Regulatory subunit of a potassium efflux system that confers protection against electrophiles. Required for full activity of KefB.</text>
</comment>
<comment type="catalytic activity">
    <reaction evidence="1">
        <text>a quinone + NADH + H(+) = a quinol + NAD(+)</text>
        <dbReference type="Rhea" id="RHEA:46160"/>
        <dbReference type="ChEBI" id="CHEBI:15378"/>
        <dbReference type="ChEBI" id="CHEBI:24646"/>
        <dbReference type="ChEBI" id="CHEBI:57540"/>
        <dbReference type="ChEBI" id="CHEBI:57945"/>
        <dbReference type="ChEBI" id="CHEBI:132124"/>
        <dbReference type="EC" id="1.6.5.2"/>
    </reaction>
</comment>
<comment type="catalytic activity">
    <reaction evidence="1">
        <text>a quinone + NADPH + H(+) = a quinol + NADP(+)</text>
        <dbReference type="Rhea" id="RHEA:46164"/>
        <dbReference type="ChEBI" id="CHEBI:15378"/>
        <dbReference type="ChEBI" id="CHEBI:24646"/>
        <dbReference type="ChEBI" id="CHEBI:57783"/>
        <dbReference type="ChEBI" id="CHEBI:58349"/>
        <dbReference type="ChEBI" id="CHEBI:132124"/>
        <dbReference type="EC" id="1.6.5.2"/>
    </reaction>
</comment>
<comment type="subunit">
    <text evidence="1">Interacts with KefB.</text>
</comment>
<comment type="subcellular location">
    <subcellularLocation>
        <location evidence="1">Cell inner membrane</location>
        <topology evidence="1">Peripheral membrane protein</topology>
        <orientation evidence="1">Cytoplasmic side</orientation>
    </subcellularLocation>
</comment>
<comment type="similarity">
    <text evidence="1">Belongs to the NAD(P)H dehydrogenase (quinone) family. KefG subfamily.</text>
</comment>
<dbReference type="EC" id="1.6.5.2" evidence="1"/>
<dbReference type="EMBL" id="AE014075">
    <property type="protein sequence ID" value="AAN82564.1"/>
    <property type="molecule type" value="Genomic_DNA"/>
</dbReference>
<dbReference type="SMR" id="P0A757"/>
<dbReference type="STRING" id="199310.c4126"/>
<dbReference type="KEGG" id="ecc:c4126"/>
<dbReference type="eggNOG" id="COG2249">
    <property type="taxonomic scope" value="Bacteria"/>
</dbReference>
<dbReference type="HOGENOM" id="CLU_058643_0_1_6"/>
<dbReference type="BioCyc" id="ECOL199310:C4126-MONOMER"/>
<dbReference type="Proteomes" id="UP000001410">
    <property type="component" value="Chromosome"/>
</dbReference>
<dbReference type="GO" id="GO:0005886">
    <property type="term" value="C:plasma membrane"/>
    <property type="evidence" value="ECO:0007669"/>
    <property type="project" value="UniProtKB-SubCell"/>
</dbReference>
<dbReference type="GO" id="GO:0009055">
    <property type="term" value="F:electron transfer activity"/>
    <property type="evidence" value="ECO:0007669"/>
    <property type="project" value="TreeGrafter"/>
</dbReference>
<dbReference type="GO" id="GO:0010181">
    <property type="term" value="F:FMN binding"/>
    <property type="evidence" value="ECO:0007669"/>
    <property type="project" value="TreeGrafter"/>
</dbReference>
<dbReference type="GO" id="GO:0050136">
    <property type="term" value="F:NADH:ubiquinone reductase (non-electrogenic) activity"/>
    <property type="evidence" value="ECO:0007669"/>
    <property type="project" value="RHEA"/>
</dbReference>
<dbReference type="GO" id="GO:0008753">
    <property type="term" value="F:NADPH dehydrogenase (quinone) activity"/>
    <property type="evidence" value="ECO:0007669"/>
    <property type="project" value="RHEA"/>
</dbReference>
<dbReference type="GO" id="GO:1901381">
    <property type="term" value="P:positive regulation of potassium ion transmembrane transport"/>
    <property type="evidence" value="ECO:0007669"/>
    <property type="project" value="UniProtKB-UniRule"/>
</dbReference>
<dbReference type="GO" id="GO:0006813">
    <property type="term" value="P:potassium ion transport"/>
    <property type="evidence" value="ECO:0007669"/>
    <property type="project" value="InterPro"/>
</dbReference>
<dbReference type="FunFam" id="3.40.50.360:FF:000013">
    <property type="entry name" value="Glutathione-regulated potassium-efflux system ancillary protein KefG"/>
    <property type="match status" value="1"/>
</dbReference>
<dbReference type="Gene3D" id="3.40.50.360">
    <property type="match status" value="1"/>
</dbReference>
<dbReference type="HAMAP" id="MF_01415">
    <property type="entry name" value="K_H_efflux_KefG"/>
    <property type="match status" value="1"/>
</dbReference>
<dbReference type="InterPro" id="IPR003680">
    <property type="entry name" value="Flavodoxin_fold"/>
</dbReference>
<dbReference type="InterPro" id="IPR029039">
    <property type="entry name" value="Flavoprotein-like_sf"/>
</dbReference>
<dbReference type="InterPro" id="IPR023947">
    <property type="entry name" value="K_H_efflux_KefG"/>
</dbReference>
<dbReference type="InterPro" id="IPR046980">
    <property type="entry name" value="KefG/KefF"/>
</dbReference>
<dbReference type="NCBIfam" id="NF003430">
    <property type="entry name" value="PRK04930.1"/>
    <property type="match status" value="1"/>
</dbReference>
<dbReference type="PANTHER" id="PTHR47307">
    <property type="entry name" value="GLUTATHIONE-REGULATED POTASSIUM-EFFLUX SYSTEM ANCILLARY PROTEIN KEFG"/>
    <property type="match status" value="1"/>
</dbReference>
<dbReference type="PANTHER" id="PTHR47307:SF1">
    <property type="entry name" value="GLUTATHIONE-REGULATED POTASSIUM-EFFLUX SYSTEM ANCILLARY PROTEIN KEFG"/>
    <property type="match status" value="1"/>
</dbReference>
<dbReference type="Pfam" id="PF02525">
    <property type="entry name" value="Flavodoxin_2"/>
    <property type="match status" value="1"/>
</dbReference>
<dbReference type="SUPFAM" id="SSF52218">
    <property type="entry name" value="Flavoproteins"/>
    <property type="match status" value="1"/>
</dbReference>
<feature type="chain" id="PRO_0000071644" description="Glutathione-regulated potassium-efflux system ancillary protein KefG">
    <location>
        <begin position="1"/>
        <end position="184"/>
    </location>
</feature>
<accession>P0A757</accession>
<accession>P45534</accession>
<protein>
    <recommendedName>
        <fullName evidence="1">Glutathione-regulated potassium-efflux system ancillary protein KefG</fullName>
    </recommendedName>
    <alternativeName>
        <fullName evidence="1">Putative quinone oxidoreductase KefG</fullName>
        <ecNumber evidence="1">1.6.5.2</ecNumber>
    </alternativeName>
</protein>
<organism>
    <name type="scientific">Escherichia coli O6:H1 (strain CFT073 / ATCC 700928 / UPEC)</name>
    <dbReference type="NCBI Taxonomy" id="199310"/>
    <lineage>
        <taxon>Bacteria</taxon>
        <taxon>Pseudomonadati</taxon>
        <taxon>Pseudomonadota</taxon>
        <taxon>Gammaproteobacteria</taxon>
        <taxon>Enterobacterales</taxon>
        <taxon>Enterobacteriaceae</taxon>
        <taxon>Escherichia</taxon>
    </lineage>
</organism>
<sequence>MMSQPAKVLLLYAHPESQDSVANRVLLKPATQLSNVTVHDLYAHYPDFFIDIPREQALLREHEVIVFQHPLYTYSCPALLKEWLDRVLSRGFASGPGGNQLAGKYWRSVITTGEPESAYRYDALNRYPMSDVLRPFELAAGMCRMHWLSPIIIYWARRQSAQELASHARAYGDWLANPLSPGGR</sequence>
<proteinExistence type="inferred from homology"/>
<evidence type="ECO:0000255" key="1">
    <source>
        <dbReference type="HAMAP-Rule" id="MF_01415"/>
    </source>
</evidence>